<evidence type="ECO:0000255" key="1">
    <source>
        <dbReference type="HAMAP-Rule" id="MF_02118"/>
    </source>
</evidence>
<evidence type="ECO:0000255" key="2">
    <source>
        <dbReference type="PROSITE-ProRule" id="PRU01067"/>
    </source>
</evidence>
<comment type="function">
    <text evidence="1">Catalyzes the transfer of endogenously produced octanoic acid from octanoyl-acyl-carrier-protein onto the lipoyl domain of GcvH, an intermediate carrier during protein lipoylation.</text>
</comment>
<comment type="catalytic activity">
    <reaction evidence="1">
        <text>octanoyl-[ACP] + L-lysyl-[protein] = N(6)-octanoyl-L-lysyl-[protein] + holo-[ACP] + H(+)</text>
        <dbReference type="Rhea" id="RHEA:17665"/>
        <dbReference type="Rhea" id="RHEA-COMP:9636"/>
        <dbReference type="Rhea" id="RHEA-COMP:9685"/>
        <dbReference type="Rhea" id="RHEA-COMP:9752"/>
        <dbReference type="Rhea" id="RHEA-COMP:9928"/>
        <dbReference type="ChEBI" id="CHEBI:15378"/>
        <dbReference type="ChEBI" id="CHEBI:29969"/>
        <dbReference type="ChEBI" id="CHEBI:64479"/>
        <dbReference type="ChEBI" id="CHEBI:78463"/>
        <dbReference type="ChEBI" id="CHEBI:78809"/>
        <dbReference type="EC" id="2.3.1.181"/>
    </reaction>
</comment>
<comment type="pathway">
    <text evidence="1">Protein modification; protein lipoylation via endogenous pathway; protein N(6)-(lipoyl)lysine from octanoyl-[acyl-carrier-protein].</text>
</comment>
<comment type="subunit">
    <text evidence="1">Monomer.</text>
</comment>
<comment type="miscellaneous">
    <text evidence="1">In the reaction, the free carboxyl group of octanoic acid is attached via an amide linkage to the epsilon-amino group of a specific lysine residue of lipoyl domains of lipoate-dependent enzymes. The reaction proceeds via an octanoyl-thioester enzyme intermediate.</text>
</comment>
<comment type="similarity">
    <text evidence="1">Belongs to the octanoyltransferase LipM family.</text>
</comment>
<dbReference type="EC" id="2.3.1.181" evidence="1"/>
<dbReference type="EMBL" id="BA000043">
    <property type="protein sequence ID" value="BAD76705.1"/>
    <property type="molecule type" value="Genomic_DNA"/>
</dbReference>
<dbReference type="RefSeq" id="WP_011231902.1">
    <property type="nucleotide sequence ID" value="NC_006510.1"/>
</dbReference>
<dbReference type="SMR" id="Q5KX81"/>
<dbReference type="STRING" id="235909.GK2420"/>
<dbReference type="KEGG" id="gka:GK2420"/>
<dbReference type="PATRIC" id="fig|235909.7.peg.2592"/>
<dbReference type="eggNOG" id="COG0095">
    <property type="taxonomic scope" value="Bacteria"/>
</dbReference>
<dbReference type="HOGENOM" id="CLU_022986_5_0_9"/>
<dbReference type="Proteomes" id="UP000001172">
    <property type="component" value="Chromosome"/>
</dbReference>
<dbReference type="GO" id="GO:0033819">
    <property type="term" value="F:lipoyl(octanoyl) transferase activity"/>
    <property type="evidence" value="ECO:0007669"/>
    <property type="project" value="UniProtKB-UniRule"/>
</dbReference>
<dbReference type="GO" id="GO:0009107">
    <property type="term" value="P:lipoate biosynthetic process"/>
    <property type="evidence" value="ECO:0007669"/>
    <property type="project" value="UniProtKB-UniRule"/>
</dbReference>
<dbReference type="GO" id="GO:0036211">
    <property type="term" value="P:protein modification process"/>
    <property type="evidence" value="ECO:0007669"/>
    <property type="project" value="InterPro"/>
</dbReference>
<dbReference type="CDD" id="cd16443">
    <property type="entry name" value="LplA"/>
    <property type="match status" value="1"/>
</dbReference>
<dbReference type="Gene3D" id="3.30.930.10">
    <property type="entry name" value="Bira Bifunctional Protein, Domain 2"/>
    <property type="match status" value="1"/>
</dbReference>
<dbReference type="HAMAP" id="MF_02118">
    <property type="entry name" value="LipM"/>
    <property type="match status" value="1"/>
</dbReference>
<dbReference type="InterPro" id="IPR045864">
    <property type="entry name" value="aa-tRNA-synth_II/BPL/LPL"/>
</dbReference>
<dbReference type="InterPro" id="IPR004143">
    <property type="entry name" value="BPL_LPL_catalytic"/>
</dbReference>
<dbReference type="InterPro" id="IPR024898">
    <property type="entry name" value="LipM"/>
</dbReference>
<dbReference type="InterPro" id="IPR050664">
    <property type="entry name" value="Octanoyltrans_LipM/LipL"/>
</dbReference>
<dbReference type="PANTHER" id="PTHR43679:SF2">
    <property type="entry name" value="OCTANOYL-[GCVH]:PROTEIN N-OCTANOYLTRANSFERASE"/>
    <property type="match status" value="1"/>
</dbReference>
<dbReference type="PANTHER" id="PTHR43679">
    <property type="entry name" value="OCTANOYLTRANSFERASE LIPM-RELATED"/>
    <property type="match status" value="1"/>
</dbReference>
<dbReference type="Pfam" id="PF21948">
    <property type="entry name" value="LplA-B_cat"/>
    <property type="match status" value="1"/>
</dbReference>
<dbReference type="SUPFAM" id="SSF55681">
    <property type="entry name" value="Class II aaRS and biotin synthetases"/>
    <property type="match status" value="1"/>
</dbReference>
<dbReference type="PROSITE" id="PS51733">
    <property type="entry name" value="BPL_LPL_CATALYTIC"/>
    <property type="match status" value="1"/>
</dbReference>
<feature type="chain" id="PRO_0000410858" description="Octanoyltransferase LipM">
    <location>
        <begin position="1"/>
        <end position="278"/>
    </location>
</feature>
<feature type="domain" description="BPL/LPL catalytic" evidence="2">
    <location>
        <begin position="33"/>
        <end position="248"/>
    </location>
</feature>
<feature type="active site" description="Acyl-thioester intermediate" evidence="1">
    <location>
        <position position="150"/>
    </location>
</feature>
<feature type="site" description="Lowers pKa of active site Cys" evidence="1">
    <location>
        <position position="165"/>
    </location>
</feature>
<sequence>MAKEVWRFIDSGYCPPAFNMALDEALLDWHSEGKIPPTVRFYGWNPPTLSIGYFQKVEKEIDLEAVKRHGLGFVRRPTGGRGVLHDKELTYSVIVSESHPAMPKTVTEAYRVISQGILEGFRYLGLDAYFAVPKTEEEKADLRSPRSAVCFDAPSWYELVVEGRKIAGSAQTRQKGVILQHGSILLDLDEELLFSLFKYPNERVKERLQRDFKKKAVAINELTSRTVTIEEAKEAFYKGFEKGLNIVLEPYTLTAEERAYVEELARAKYESDEWNFKR</sequence>
<proteinExistence type="inferred from homology"/>
<organism>
    <name type="scientific">Geobacillus kaustophilus (strain HTA426)</name>
    <dbReference type="NCBI Taxonomy" id="235909"/>
    <lineage>
        <taxon>Bacteria</taxon>
        <taxon>Bacillati</taxon>
        <taxon>Bacillota</taxon>
        <taxon>Bacilli</taxon>
        <taxon>Bacillales</taxon>
        <taxon>Anoxybacillaceae</taxon>
        <taxon>Geobacillus</taxon>
        <taxon>Geobacillus thermoleovorans group</taxon>
    </lineage>
</organism>
<gene>
    <name evidence="1" type="primary">lipM</name>
    <name type="ordered locus">GK2420</name>
</gene>
<name>LIPM_GEOKA</name>
<protein>
    <recommendedName>
        <fullName evidence="1">Octanoyltransferase LipM</fullName>
        <ecNumber evidence="1">2.3.1.181</ecNumber>
    </recommendedName>
    <alternativeName>
        <fullName evidence="1">Octanoyl-[acyl-carrier-protein]:[GcvH] N-octanoyltransferase</fullName>
    </alternativeName>
</protein>
<keyword id="KW-0012">Acyltransferase</keyword>
<keyword id="KW-1185">Reference proteome</keyword>
<keyword id="KW-0808">Transferase</keyword>
<accession>Q5KX81</accession>
<reference key="1">
    <citation type="journal article" date="2004" name="Nucleic Acids Res.">
        <title>Thermoadaptation trait revealed by the genome sequence of thermophilic Geobacillus kaustophilus.</title>
        <authorList>
            <person name="Takami H."/>
            <person name="Takaki Y."/>
            <person name="Chee G.-J."/>
            <person name="Nishi S."/>
            <person name="Shimamura S."/>
            <person name="Suzuki H."/>
            <person name="Matsui S."/>
            <person name="Uchiyama I."/>
        </authorList>
    </citation>
    <scope>NUCLEOTIDE SEQUENCE [LARGE SCALE GENOMIC DNA]</scope>
    <source>
        <strain>HTA426</strain>
    </source>
</reference>